<reference key="1">
    <citation type="journal article" date="2009" name="Mol. Biol. Evol.">
        <title>Molecular evolution, functional variation, and proposed nomenclature of the gene family that includes sphingomyelinase D in sicariid spider venoms.</title>
        <authorList>
            <person name="Binford G.J."/>
            <person name="Bodner M.R."/>
            <person name="Cordes M.H."/>
            <person name="Baldwin K.L."/>
            <person name="Rynerson M.R."/>
            <person name="Burns S.N."/>
            <person name="Zobel-Thropp P.A."/>
        </authorList>
    </citation>
    <scope>NUCLEOTIDE SEQUENCE [MRNA]</scope>
    <scope>NOMENCLATURE</scope>
    <source>
        <tissue>Venom gland</tissue>
    </source>
</reference>
<dbReference type="EC" id="4.6.1.-" evidence="4"/>
<dbReference type="EMBL" id="FJ171379">
    <property type="protein sequence ID" value="ACN48875.1"/>
    <property type="molecule type" value="mRNA"/>
</dbReference>
<dbReference type="SMR" id="C0JAU4"/>
<dbReference type="GO" id="GO:0005576">
    <property type="term" value="C:extracellular region"/>
    <property type="evidence" value="ECO:0007669"/>
    <property type="project" value="UniProtKB-SubCell"/>
</dbReference>
<dbReference type="GO" id="GO:0016829">
    <property type="term" value="F:lyase activity"/>
    <property type="evidence" value="ECO:0007669"/>
    <property type="project" value="UniProtKB-KW"/>
</dbReference>
<dbReference type="GO" id="GO:0046872">
    <property type="term" value="F:metal ion binding"/>
    <property type="evidence" value="ECO:0007669"/>
    <property type="project" value="UniProtKB-KW"/>
</dbReference>
<dbReference type="GO" id="GO:0008081">
    <property type="term" value="F:phosphoric diester hydrolase activity"/>
    <property type="evidence" value="ECO:0007669"/>
    <property type="project" value="InterPro"/>
</dbReference>
<dbReference type="GO" id="GO:0090729">
    <property type="term" value="F:toxin activity"/>
    <property type="evidence" value="ECO:0007669"/>
    <property type="project" value="UniProtKB-KW"/>
</dbReference>
<dbReference type="GO" id="GO:0031640">
    <property type="term" value="P:killing of cells of another organism"/>
    <property type="evidence" value="ECO:0007669"/>
    <property type="project" value="UniProtKB-KW"/>
</dbReference>
<dbReference type="GO" id="GO:0016042">
    <property type="term" value="P:lipid catabolic process"/>
    <property type="evidence" value="ECO:0007669"/>
    <property type="project" value="UniProtKB-KW"/>
</dbReference>
<dbReference type="CDD" id="cd08576">
    <property type="entry name" value="GDPD_like_SMaseD_PLD"/>
    <property type="match status" value="1"/>
</dbReference>
<dbReference type="Gene3D" id="3.20.20.190">
    <property type="entry name" value="Phosphatidylinositol (PI) phosphodiesterase"/>
    <property type="match status" value="1"/>
</dbReference>
<dbReference type="InterPro" id="IPR017946">
    <property type="entry name" value="PLC-like_Pdiesterase_TIM-brl"/>
</dbReference>
<dbReference type="Pfam" id="PF13653">
    <property type="entry name" value="GDPD_2"/>
    <property type="match status" value="1"/>
</dbReference>
<dbReference type="SUPFAM" id="SSF51695">
    <property type="entry name" value="PLC-like phosphodiesterases"/>
    <property type="match status" value="1"/>
</dbReference>
<protein>
    <recommendedName>
        <fullName evidence="7">Dermonecrotic toxin LarSicTox-alphaIB2bii</fullName>
        <ecNumber evidence="4">4.6.1.-</ecNumber>
    </recommendedName>
    <alternativeName>
        <fullName>Phospholipase D</fullName>
        <shortName>PLD</shortName>
    </alternativeName>
    <alternativeName>
        <fullName>Sphingomyelin phosphodiesterase D</fullName>
        <shortName>SMD</shortName>
        <shortName>SMase D</shortName>
        <shortName>Sphingomyelinase D</shortName>
    </alternativeName>
</protein>
<keyword id="KW-0204">Cytolysis</keyword>
<keyword id="KW-1061">Dermonecrotic toxin</keyword>
<keyword id="KW-1015">Disulfide bond</keyword>
<keyword id="KW-0325">Glycoprotein</keyword>
<keyword id="KW-0354">Hemolysis</keyword>
<keyword id="KW-0442">Lipid degradation</keyword>
<keyword id="KW-0443">Lipid metabolism</keyword>
<keyword id="KW-0456">Lyase</keyword>
<keyword id="KW-0460">Magnesium</keyword>
<keyword id="KW-0479">Metal-binding</keyword>
<keyword id="KW-0964">Secreted</keyword>
<keyword id="KW-0800">Toxin</keyword>
<name>A1LB2_LOXAR</name>
<feature type="chain" id="PRO_0000392795" description="Dermonecrotic toxin LarSicTox-alphaIB2bii">
    <location>
        <begin position="1" status="less than"/>
        <end position="274"/>
    </location>
</feature>
<feature type="active site" evidence="5">
    <location>
        <position position="3"/>
    </location>
</feature>
<feature type="active site" description="Nucleophile" evidence="5">
    <location>
        <position position="39"/>
    </location>
</feature>
<feature type="binding site" evidence="5">
    <location>
        <position position="23"/>
    </location>
    <ligand>
        <name>Mg(2+)</name>
        <dbReference type="ChEBI" id="CHEBI:18420"/>
    </ligand>
</feature>
<feature type="binding site" evidence="5">
    <location>
        <position position="25"/>
    </location>
    <ligand>
        <name>Mg(2+)</name>
        <dbReference type="ChEBI" id="CHEBI:18420"/>
    </ligand>
</feature>
<feature type="binding site" evidence="5">
    <location>
        <position position="83"/>
    </location>
    <ligand>
        <name>Mg(2+)</name>
        <dbReference type="ChEBI" id="CHEBI:18420"/>
    </ligand>
</feature>
<feature type="glycosylation site" description="N-linked (GlcNAc...) asparagine" evidence="6">
    <location>
        <position position="251"/>
    </location>
</feature>
<feature type="disulfide bond" evidence="3">
    <location>
        <begin position="43"/>
        <end position="49"/>
    </location>
</feature>
<feature type="disulfide bond" evidence="3">
    <location>
        <begin position="45"/>
        <end position="188"/>
    </location>
</feature>
<feature type="non-terminal residue">
    <location>
        <position position="1"/>
    </location>
</feature>
<sequence length="274" mass="31091">MGHMVNANYQIDEFVNLGANSIETDVSFDSSANPEYTYHGVPCDCRRWCKKWEYFNNFLKALRKATTPGDSKYHEKLVLVVFDLKAGSLYDNQAYDAGKKLAKNLLQHYWNNGNNGGRAYIVLSIPNLAHYKLITGFKETLKTEGHPELMEKVGYDFSGNDSIDQVANAYKKAGVTGRVWQSDGITNCVASFIRGLDRAKKAVKNRDSSNGYINKVYYWTVDKYATTREALDIGVDGIMTNYPDVIANVLNESAYKEKFRLATYDDNPWETFKN</sequence>
<evidence type="ECO:0000250" key="1">
    <source>
        <dbReference type="UniProtKB" id="A0A0D4WTV1"/>
    </source>
</evidence>
<evidence type="ECO:0000250" key="2">
    <source>
        <dbReference type="UniProtKB" id="A0A0D4WV12"/>
    </source>
</evidence>
<evidence type="ECO:0000250" key="3">
    <source>
        <dbReference type="UniProtKB" id="P0CE80"/>
    </source>
</evidence>
<evidence type="ECO:0000250" key="4">
    <source>
        <dbReference type="UniProtKB" id="Q4ZFU2"/>
    </source>
</evidence>
<evidence type="ECO:0000250" key="5">
    <source>
        <dbReference type="UniProtKB" id="Q8I914"/>
    </source>
</evidence>
<evidence type="ECO:0000255" key="6"/>
<evidence type="ECO:0000303" key="7">
    <source>
    </source>
</evidence>
<evidence type="ECO:0000305" key="8"/>
<evidence type="ECO:0000305" key="9">
    <source>
    </source>
</evidence>
<organism>
    <name type="scientific">Loxosceles arizonica</name>
    <name type="common">Arizona brown spider</name>
    <dbReference type="NCBI Taxonomy" id="196454"/>
    <lineage>
        <taxon>Eukaryota</taxon>
        <taxon>Metazoa</taxon>
        <taxon>Ecdysozoa</taxon>
        <taxon>Arthropoda</taxon>
        <taxon>Chelicerata</taxon>
        <taxon>Arachnida</taxon>
        <taxon>Araneae</taxon>
        <taxon>Araneomorphae</taxon>
        <taxon>Haplogynae</taxon>
        <taxon>Scytodoidea</taxon>
        <taxon>Sicariidae</taxon>
        <taxon>Loxosceles</taxon>
    </lineage>
</organism>
<accession>C0JAU4</accession>
<proteinExistence type="evidence at transcript level"/>
<comment type="function">
    <text evidence="1 3">Dermonecrotic toxins cleave the phosphodiester linkage between the phosphate and headgroup of certain phospholipids (sphingolipid and lysolipid substrates), forming an alcohol (often choline) and a cyclic phosphate (By similarity). This toxin acts on sphingomyelin (SM) (By similarity). It may also act on ceramide phosphoethanolamine (CPE), lysophosphatidylcholine (LPC) and lysophosphatidylethanolamine (LPE), but not on lysophosphatidylserine (LPS), and lysophosphatidylglycerol (LPG) (By similarity). It acts by transphosphatidylation, releasing exclusively cyclic phosphate products as second products (By similarity). Induces dermonecrosis, hemolysis, increased vascular permeability, edema, inflammatory response, and platelet aggregation (By similarity).</text>
</comment>
<comment type="catalytic activity">
    <reaction evidence="1">
        <text>an N-(acyl)-sphingosylphosphocholine = an N-(acyl)-sphingosyl-1,3-cyclic phosphate + choline</text>
        <dbReference type="Rhea" id="RHEA:60652"/>
        <dbReference type="ChEBI" id="CHEBI:15354"/>
        <dbReference type="ChEBI" id="CHEBI:64583"/>
        <dbReference type="ChEBI" id="CHEBI:143892"/>
    </reaction>
</comment>
<comment type="catalytic activity">
    <reaction evidence="1">
        <text>an N-(acyl)-sphingosylphosphoethanolamine = an N-(acyl)-sphingosyl-1,3-cyclic phosphate + ethanolamine</text>
        <dbReference type="Rhea" id="RHEA:60648"/>
        <dbReference type="ChEBI" id="CHEBI:57603"/>
        <dbReference type="ChEBI" id="CHEBI:143891"/>
        <dbReference type="ChEBI" id="CHEBI:143892"/>
    </reaction>
</comment>
<comment type="catalytic activity">
    <reaction evidence="1">
        <text>a 1-acyl-sn-glycero-3-phosphocholine = a 1-acyl-sn-glycero-2,3-cyclic phosphate + choline</text>
        <dbReference type="Rhea" id="RHEA:60700"/>
        <dbReference type="ChEBI" id="CHEBI:15354"/>
        <dbReference type="ChEBI" id="CHEBI:58168"/>
        <dbReference type="ChEBI" id="CHEBI:143947"/>
    </reaction>
</comment>
<comment type="catalytic activity">
    <reaction evidence="1">
        <text>a 1-acyl-sn-glycero-3-phosphoethanolamine = a 1-acyl-sn-glycero-2,3-cyclic phosphate + ethanolamine</text>
        <dbReference type="Rhea" id="RHEA:60704"/>
        <dbReference type="ChEBI" id="CHEBI:57603"/>
        <dbReference type="ChEBI" id="CHEBI:64381"/>
        <dbReference type="ChEBI" id="CHEBI:143947"/>
    </reaction>
</comment>
<comment type="cofactor">
    <cofactor evidence="5">
        <name>Mg(2+)</name>
        <dbReference type="ChEBI" id="CHEBI:18420"/>
    </cofactor>
    <text evidence="5">Binds 1 Mg(2+) ion per subunit.</text>
</comment>
<comment type="subcellular location">
    <subcellularLocation>
        <location evidence="9">Secreted</location>
    </subcellularLocation>
</comment>
<comment type="tissue specificity">
    <text evidence="9">Expressed by the venom gland.</text>
</comment>
<comment type="similarity">
    <text evidence="8">Belongs to the arthropod phospholipase D family. Class II subfamily.</text>
</comment>
<comment type="caution">
    <text evidence="1 2 4">The most common activity assay for dermonecrotic toxins detects enzymatic activity by monitoring choline release from substrate. Liberation of choline from sphingomyelin (SM) or lysophosphatidylcholine (LPC) is commonly assumed to result from substrate hydrolysis, giving either ceramide-1-phosphate (C1P) or lysophosphatidic acid (LPA), respectively, as a second product. However, two studies from Lajoie and colleagues (2013 and 2015) report the observation of exclusive formation of cyclic phosphate products as second products, resulting from intramolecular transphosphatidylation. Cyclic phosphates have vastly different biological properties from their monoester counterparts, and they may be relevant to the pathology of brown spider envenomation.</text>
</comment>